<organism>
    <name type="scientific">Lycosa singoriensis</name>
    <name type="common">Wolf spider</name>
    <name type="synonym">Aranea singoriensis</name>
    <dbReference type="NCBI Taxonomy" id="434756"/>
    <lineage>
        <taxon>Eukaryota</taxon>
        <taxon>Metazoa</taxon>
        <taxon>Ecdysozoa</taxon>
        <taxon>Arthropoda</taxon>
        <taxon>Chelicerata</taxon>
        <taxon>Arachnida</taxon>
        <taxon>Araneae</taxon>
        <taxon>Araneomorphae</taxon>
        <taxon>Entelegynae</taxon>
        <taxon>Lycosoidea</taxon>
        <taxon>Lycosidae</taxon>
        <taxon>Lycosa</taxon>
    </lineage>
</organism>
<protein>
    <recommendedName>
        <fullName>U13-lycotoxin-Ls1d</fullName>
    </recommendedName>
    <alternativeName>
        <fullName>Toxin-like structure LSTX-L5</fullName>
    </alternativeName>
</protein>
<sequence length="120" mass="13745">MKILFVLISILYAVYCFSSEEDVDSAYLANELEPVEDINSEQYAALEPKEEQERSCADMGQDCKDDCDCCLNIATCNCRFGRYFCSCTFGDYQTCLRKKGKCKRNRPQSCPRSNLNRKKG</sequence>
<comment type="subcellular location">
    <subcellularLocation>
        <location evidence="1">Secreted</location>
    </subcellularLocation>
</comment>
<comment type="tissue specificity">
    <text>Expressed by the venom gland.</text>
</comment>
<comment type="domain">
    <text evidence="1">The presence of a 'disulfide through disulfide kOR' structurally defines this protein as a knottin.</text>
</comment>
<comment type="PTM">
    <text evidence="3">Contains 6 disulfide bonds.</text>
</comment>
<comment type="similarity">
    <text evidence="3">Belongs to the neurotoxin 05 (agouti) family.</text>
</comment>
<proteinExistence type="evidence at transcript level"/>
<feature type="signal peptide" evidence="2">
    <location>
        <begin position="1"/>
        <end position="16"/>
    </location>
</feature>
<feature type="propeptide" id="PRO_0000401865" evidence="1">
    <location>
        <begin position="17"/>
        <end position="54"/>
    </location>
</feature>
<feature type="chain" id="PRO_0000401866" description="U13-lycotoxin-Ls1d">
    <location>
        <begin position="55"/>
        <end position="120"/>
    </location>
</feature>
<feature type="domain" description="Agouti">
    <location>
        <begin position="56"/>
        <end position="95"/>
    </location>
</feature>
<feature type="disulfide bond" evidence="1">
    <location>
        <begin position="56"/>
        <end position="70"/>
    </location>
</feature>
<feature type="disulfide bond" evidence="1">
    <location>
        <begin position="63"/>
        <end position="76"/>
    </location>
</feature>
<feature type="disulfide bond" evidence="1">
    <location>
        <begin position="69"/>
        <end position="87"/>
    </location>
</feature>
<feature type="disulfide bond" evidence="1">
    <location>
        <begin position="78"/>
        <end position="85"/>
    </location>
</feature>
<evidence type="ECO:0000250" key="1"/>
<evidence type="ECO:0000255" key="2"/>
<evidence type="ECO:0000305" key="3"/>
<reference key="1">
    <citation type="journal article" date="2010" name="Zoology">
        <title>Transcriptome analysis of the venom glands of the Chinese wolf spider Lycosa singoriensis.</title>
        <authorList>
            <person name="Zhang Y."/>
            <person name="Chen J."/>
            <person name="Tang X."/>
            <person name="Wang F."/>
            <person name="Jiang L."/>
            <person name="Xiong X."/>
            <person name="Wang M."/>
            <person name="Rong M."/>
            <person name="Liu Z."/>
            <person name="Liang S."/>
        </authorList>
    </citation>
    <scope>NUCLEOTIDE SEQUENCE [LARGE SCALE MRNA]</scope>
    <source>
        <tissue>Venom gland</tissue>
    </source>
</reference>
<name>TXD05_LYCSI</name>
<accession>B6DD23</accession>
<keyword id="KW-1015">Disulfide bond</keyword>
<keyword id="KW-0960">Knottin</keyword>
<keyword id="KW-0964">Secreted</keyword>
<keyword id="KW-0732">Signal</keyword>
<keyword id="KW-0800">Toxin</keyword>
<dbReference type="EMBL" id="EU926107">
    <property type="protein sequence ID" value="ACI41439.1"/>
    <property type="molecule type" value="mRNA"/>
</dbReference>
<dbReference type="EMBL" id="FM864111">
    <property type="protein sequence ID" value="CAS03708.1"/>
    <property type="molecule type" value="mRNA"/>
</dbReference>
<dbReference type="SMR" id="B6DD23"/>
<dbReference type="ArachnoServer" id="AS001046">
    <property type="toxin name" value="U13-lycotoxin-Ls1d"/>
</dbReference>
<dbReference type="GO" id="GO:0005576">
    <property type="term" value="C:extracellular region"/>
    <property type="evidence" value="ECO:0007669"/>
    <property type="project" value="UniProtKB-SubCell"/>
</dbReference>
<dbReference type="GO" id="GO:0090729">
    <property type="term" value="F:toxin activity"/>
    <property type="evidence" value="ECO:0007669"/>
    <property type="project" value="UniProtKB-KW"/>
</dbReference>